<keyword id="KW-0240">DNA-directed RNA polymerase</keyword>
<keyword id="KW-0548">Nucleotidyltransferase</keyword>
<keyword id="KW-1185">Reference proteome</keyword>
<keyword id="KW-0804">Transcription</keyword>
<keyword id="KW-0808">Transferase</keyword>
<name>RPOB_PROMT</name>
<organism>
    <name type="scientific">Prochlorococcus marinus (strain NATL2A)</name>
    <dbReference type="NCBI Taxonomy" id="59920"/>
    <lineage>
        <taxon>Bacteria</taxon>
        <taxon>Bacillati</taxon>
        <taxon>Cyanobacteriota</taxon>
        <taxon>Cyanophyceae</taxon>
        <taxon>Synechococcales</taxon>
        <taxon>Prochlorococcaceae</taxon>
        <taxon>Prochlorococcus</taxon>
    </lineage>
</organism>
<reference key="1">
    <citation type="journal article" date="2007" name="PLoS Genet.">
        <title>Patterns and implications of gene gain and loss in the evolution of Prochlorococcus.</title>
        <authorList>
            <person name="Kettler G.C."/>
            <person name="Martiny A.C."/>
            <person name="Huang K."/>
            <person name="Zucker J."/>
            <person name="Coleman M.L."/>
            <person name="Rodrigue S."/>
            <person name="Chen F."/>
            <person name="Lapidus A."/>
            <person name="Ferriera S."/>
            <person name="Johnson J."/>
            <person name="Steglich C."/>
            <person name="Church G.M."/>
            <person name="Richardson P."/>
            <person name="Chisholm S.W."/>
        </authorList>
    </citation>
    <scope>NUCLEOTIDE SEQUENCE [LARGE SCALE GENOMIC DNA]</scope>
    <source>
        <strain>NATL2A</strain>
    </source>
</reference>
<dbReference type="EC" id="2.7.7.6" evidence="1"/>
<dbReference type="EMBL" id="CP000095">
    <property type="protein sequence ID" value="AAZ58506.1"/>
    <property type="molecule type" value="Genomic_DNA"/>
</dbReference>
<dbReference type="RefSeq" id="WP_011295361.1">
    <property type="nucleotide sequence ID" value="NC_007335.2"/>
</dbReference>
<dbReference type="SMR" id="Q46J22"/>
<dbReference type="STRING" id="59920.PMN2A_1016"/>
<dbReference type="KEGG" id="pmn:PMN2A_1016"/>
<dbReference type="HOGENOM" id="CLU_000524_4_1_3"/>
<dbReference type="OrthoDB" id="9803954at2"/>
<dbReference type="PhylomeDB" id="Q46J22"/>
<dbReference type="Proteomes" id="UP000002535">
    <property type="component" value="Chromosome"/>
</dbReference>
<dbReference type="GO" id="GO:0000428">
    <property type="term" value="C:DNA-directed RNA polymerase complex"/>
    <property type="evidence" value="ECO:0007669"/>
    <property type="project" value="UniProtKB-KW"/>
</dbReference>
<dbReference type="GO" id="GO:0003677">
    <property type="term" value="F:DNA binding"/>
    <property type="evidence" value="ECO:0007669"/>
    <property type="project" value="UniProtKB-UniRule"/>
</dbReference>
<dbReference type="GO" id="GO:0003899">
    <property type="term" value="F:DNA-directed RNA polymerase activity"/>
    <property type="evidence" value="ECO:0007669"/>
    <property type="project" value="UniProtKB-UniRule"/>
</dbReference>
<dbReference type="GO" id="GO:0032549">
    <property type="term" value="F:ribonucleoside binding"/>
    <property type="evidence" value="ECO:0007669"/>
    <property type="project" value="InterPro"/>
</dbReference>
<dbReference type="GO" id="GO:0006351">
    <property type="term" value="P:DNA-templated transcription"/>
    <property type="evidence" value="ECO:0007669"/>
    <property type="project" value="UniProtKB-UniRule"/>
</dbReference>
<dbReference type="CDD" id="cd00653">
    <property type="entry name" value="RNA_pol_B_RPB2"/>
    <property type="match status" value="1"/>
</dbReference>
<dbReference type="FunFam" id="3.90.1800.10:FF:000001">
    <property type="entry name" value="DNA-directed RNA polymerase subunit beta"/>
    <property type="match status" value="1"/>
</dbReference>
<dbReference type="Gene3D" id="2.40.50.100">
    <property type="match status" value="1"/>
</dbReference>
<dbReference type="Gene3D" id="2.40.50.150">
    <property type="match status" value="1"/>
</dbReference>
<dbReference type="Gene3D" id="3.90.1100.10">
    <property type="match status" value="1"/>
</dbReference>
<dbReference type="Gene3D" id="2.30.150.10">
    <property type="entry name" value="DNA-directed RNA polymerase, beta subunit, external 1 domain"/>
    <property type="match status" value="1"/>
</dbReference>
<dbReference type="Gene3D" id="2.40.270.10">
    <property type="entry name" value="DNA-directed RNA polymerase, subunit 2, domain 6"/>
    <property type="match status" value="1"/>
</dbReference>
<dbReference type="Gene3D" id="3.90.1800.10">
    <property type="entry name" value="RNA polymerase alpha subunit dimerisation domain"/>
    <property type="match status" value="1"/>
</dbReference>
<dbReference type="Gene3D" id="3.90.1110.10">
    <property type="entry name" value="RNA polymerase Rpb2, domain 2"/>
    <property type="match status" value="1"/>
</dbReference>
<dbReference type="HAMAP" id="MF_01321">
    <property type="entry name" value="RNApol_bact_RpoB"/>
    <property type="match status" value="1"/>
</dbReference>
<dbReference type="InterPro" id="IPR042107">
    <property type="entry name" value="DNA-dir_RNA_pol_bsu_ext_1_sf"/>
</dbReference>
<dbReference type="InterPro" id="IPR019462">
    <property type="entry name" value="DNA-dir_RNA_pol_bsu_external_1"/>
</dbReference>
<dbReference type="InterPro" id="IPR015712">
    <property type="entry name" value="DNA-dir_RNA_pol_su2"/>
</dbReference>
<dbReference type="InterPro" id="IPR007120">
    <property type="entry name" value="DNA-dir_RNAP_su2_dom"/>
</dbReference>
<dbReference type="InterPro" id="IPR037033">
    <property type="entry name" value="DNA-dir_RNAP_su2_hyb_sf"/>
</dbReference>
<dbReference type="InterPro" id="IPR010243">
    <property type="entry name" value="RNA_pol_bsu_bac"/>
</dbReference>
<dbReference type="InterPro" id="IPR007121">
    <property type="entry name" value="RNA_pol_bsu_CS"/>
</dbReference>
<dbReference type="InterPro" id="IPR007644">
    <property type="entry name" value="RNA_pol_bsu_protrusion"/>
</dbReference>
<dbReference type="InterPro" id="IPR007642">
    <property type="entry name" value="RNA_pol_Rpb2_2"/>
</dbReference>
<dbReference type="InterPro" id="IPR037034">
    <property type="entry name" value="RNA_pol_Rpb2_2_sf"/>
</dbReference>
<dbReference type="InterPro" id="IPR007645">
    <property type="entry name" value="RNA_pol_Rpb2_3"/>
</dbReference>
<dbReference type="InterPro" id="IPR007641">
    <property type="entry name" value="RNA_pol_Rpb2_7"/>
</dbReference>
<dbReference type="InterPro" id="IPR014724">
    <property type="entry name" value="RNA_pol_RPB2_OB-fold"/>
</dbReference>
<dbReference type="NCBIfam" id="NF001616">
    <property type="entry name" value="PRK00405.1"/>
    <property type="match status" value="1"/>
</dbReference>
<dbReference type="NCBIfam" id="TIGR02013">
    <property type="entry name" value="rpoB"/>
    <property type="match status" value="1"/>
</dbReference>
<dbReference type="PANTHER" id="PTHR20856">
    <property type="entry name" value="DNA-DIRECTED RNA POLYMERASE I SUBUNIT 2"/>
    <property type="match status" value="1"/>
</dbReference>
<dbReference type="Pfam" id="PF04563">
    <property type="entry name" value="RNA_pol_Rpb2_1"/>
    <property type="match status" value="1"/>
</dbReference>
<dbReference type="Pfam" id="PF04561">
    <property type="entry name" value="RNA_pol_Rpb2_2"/>
    <property type="match status" value="1"/>
</dbReference>
<dbReference type="Pfam" id="PF04565">
    <property type="entry name" value="RNA_pol_Rpb2_3"/>
    <property type="match status" value="1"/>
</dbReference>
<dbReference type="Pfam" id="PF10385">
    <property type="entry name" value="RNA_pol_Rpb2_45"/>
    <property type="match status" value="1"/>
</dbReference>
<dbReference type="Pfam" id="PF00562">
    <property type="entry name" value="RNA_pol_Rpb2_6"/>
    <property type="match status" value="1"/>
</dbReference>
<dbReference type="Pfam" id="PF04560">
    <property type="entry name" value="RNA_pol_Rpb2_7"/>
    <property type="match status" value="1"/>
</dbReference>
<dbReference type="SUPFAM" id="SSF64484">
    <property type="entry name" value="beta and beta-prime subunits of DNA dependent RNA-polymerase"/>
    <property type="match status" value="1"/>
</dbReference>
<dbReference type="PROSITE" id="PS01166">
    <property type="entry name" value="RNA_POL_BETA"/>
    <property type="match status" value="1"/>
</dbReference>
<protein>
    <recommendedName>
        <fullName evidence="1">DNA-directed RNA polymerase subunit beta</fullName>
        <shortName evidence="1">RNAP subunit beta</shortName>
        <ecNumber evidence="1">2.7.7.6</ecNumber>
    </recommendedName>
    <alternativeName>
        <fullName evidence="1">RNA polymerase subunit beta</fullName>
    </alternativeName>
    <alternativeName>
        <fullName evidence="1">Transcriptase subunit beta</fullName>
    </alternativeName>
</protein>
<feature type="chain" id="PRO_0000224091" description="DNA-directed RNA polymerase subunit beta">
    <location>
        <begin position="1"/>
        <end position="1095"/>
    </location>
</feature>
<feature type="region of interest" description="Disordered" evidence="2">
    <location>
        <begin position="1069"/>
        <end position="1095"/>
    </location>
</feature>
<proteinExistence type="inferred from homology"/>
<comment type="function">
    <text evidence="1">DNA-dependent RNA polymerase catalyzes the transcription of DNA into RNA using the four ribonucleoside triphosphates as substrates.</text>
</comment>
<comment type="catalytic activity">
    <reaction evidence="1">
        <text>RNA(n) + a ribonucleoside 5'-triphosphate = RNA(n+1) + diphosphate</text>
        <dbReference type="Rhea" id="RHEA:21248"/>
        <dbReference type="Rhea" id="RHEA-COMP:14527"/>
        <dbReference type="Rhea" id="RHEA-COMP:17342"/>
        <dbReference type="ChEBI" id="CHEBI:33019"/>
        <dbReference type="ChEBI" id="CHEBI:61557"/>
        <dbReference type="ChEBI" id="CHEBI:140395"/>
        <dbReference type="EC" id="2.7.7.6"/>
    </reaction>
</comment>
<comment type="subunit">
    <text evidence="1">In cyanobacteria the RNAP catalytic core is composed of 2 alpha, 1 beta, 1 beta', 1 gamma and 1 omega subunit. When a sigma factor is associated with the core the holoenzyme is formed, which can initiate transcription.</text>
</comment>
<comment type="similarity">
    <text evidence="1">Belongs to the RNA polymerase beta chain family.</text>
</comment>
<gene>
    <name evidence="1" type="primary">rpoB</name>
    <name type="ordered locus">PMN2A_1016</name>
</gene>
<evidence type="ECO:0000255" key="1">
    <source>
        <dbReference type="HAMAP-Rule" id="MF_01321"/>
    </source>
</evidence>
<evidence type="ECO:0000256" key="2">
    <source>
        <dbReference type="SAM" id="MobiDB-lite"/>
    </source>
</evidence>
<sequence length="1095" mass="122610">MSRSAIQVAKAATYLPDLVEVQRSSFKWFLDKGLIEELDNFSPITDYTGKLELHFIGAEYKLKRPRHDVEEAKRRDATFASQMYVTCRLVNKETGEIKEQEVFIGELPLMTERGTFIINGAERVIVNQIVRSPGVYFKDEQDKNGRRTYNASVIPNRGAWLKFETDKNDLLHVRVDKTRKINAHVLMRAMGLSDNDVIDKLRHPEFYKKSIDAANEEGISSEDQALLELYKKLRPGEPPSVSGGQQLLQTRFFDPKRYDLGRVGRYKINKKLRLTIPDNLRTLTNEDVLSTLDYLINLELDVGGATLDDIDHLGNRRVRSVGELLQNQVRVGLNRLERIIKERMTVGETDSLTPAQLVNPKPLVAAIKEFFGSSQLSQFMDQTNPLAELTHKRRISALGPGGLTRERAGFAVRDIHPSHYGRLCPIETPEGPNAGLINSLATHARVNEYGFIETPFWKVENGRLIKEGDPIYLSADLEDECRVAPGDVATNEEGKIMAELVPVRYRQDFETVSPEQVDYVQLSPVQVISVAASLIPFLEHDDANRALMGSNMQRQAVPLLRPERPLVGTGLETQVARDSGMVPISKVNGKVTYVDANAIVVTDDEGNDHTHYLQKYQRSNQDTCLNHRPIVFNGDPVIVGQVLADGSACEGGEIALGQNVLIAYMPWEGYNYEDAILVSERLVKDDLYTSVHIEKYEIEARQTKLGPEEITREIPNVSEENLGNLDEMGIIRIGAYVESGDILVGKVTPKGESDQPPEEKLLRAIFGEKARDVRDNSLRVPSTERGRVVDVRIYTREQGDELPPGANMVVRVYVAQRRKIQVGDKMAGRHGNKGIISRILPREDMPYLPDGTPVDICLNPLGVPSRMNVGQVFELLMGWAASNLDCRVKIVPFDEMYGPEMSNQTVQAYLKKAAKQPGKSWVYNPKDPGKLLLKDGRTGEPFDQPVAVGYAHFLKLVHLVDDKIHARSTGPYSLVTQQPLGGKAQQGGQRLGEMEVWALEAYGAAYTLQELLTVKSDDMQGRNEALNSIVKGKPIPRPGTPESFKVLMRELQSLGLDIGVYTDDGKEVDLMQDVNPRRSTPSRPTYESLGKEYEE</sequence>
<accession>Q46J22</accession>